<feature type="chain" id="PRO_0000299693" description="Putative uncharacterized protein YOL085W-A">
    <location>
        <begin position="1"/>
        <end position="70"/>
    </location>
</feature>
<gene>
    <name type="ordered locus">YOL085W-A</name>
</gene>
<sequence length="70" mass="8037">MRVSPSRSWSLYCSHHRQTRVSQVLAHSSSILMLQMHSGSFGNLNNDTSCRGRHHRNPNRHSYCFSNLAP</sequence>
<organism>
    <name type="scientific">Saccharomyces cerevisiae (strain ATCC 204508 / S288c)</name>
    <name type="common">Baker's yeast</name>
    <dbReference type="NCBI Taxonomy" id="559292"/>
    <lineage>
        <taxon>Eukaryota</taxon>
        <taxon>Fungi</taxon>
        <taxon>Dikarya</taxon>
        <taxon>Ascomycota</taxon>
        <taxon>Saccharomycotina</taxon>
        <taxon>Saccharomycetes</taxon>
        <taxon>Saccharomycetales</taxon>
        <taxon>Saccharomycetaceae</taxon>
        <taxon>Saccharomyces</taxon>
    </lineage>
</organism>
<protein>
    <recommendedName>
        <fullName>Putative uncharacterized protein YOL085W-A</fullName>
    </recommendedName>
</protein>
<comment type="miscellaneous">
    <text evidence="1">Partially overlaps YOL085C.</text>
</comment>
<comment type="caution">
    <text evidence="2">Product of a dubious gene prediction unlikely to encode a functional protein. Because of that it is not part of the S.cerevisiae S288c complete/reference proteome set.</text>
</comment>
<dbReference type="EMBL" id="X83121">
    <property type="status" value="NOT_ANNOTATED_CDS"/>
    <property type="molecule type" value="Genomic_DNA"/>
</dbReference>
<dbReference type="EMBL" id="Z74827">
    <property type="status" value="NOT_ANNOTATED_CDS"/>
    <property type="molecule type" value="Genomic_DNA"/>
</dbReference>
<dbReference type="EMBL" id="AF479930">
    <property type="protein sequence ID" value="AAL79243.1"/>
    <property type="molecule type" value="Genomic_DNA"/>
</dbReference>
<dbReference type="PaxDb" id="4932-YOL085W-A"/>
<dbReference type="EnsemblFungi" id="YOL085W-A_mRNA">
    <property type="protein sequence ID" value="YOL085W-A"/>
    <property type="gene ID" value="YOL085W-A"/>
</dbReference>
<dbReference type="AGR" id="SGD:S000028708"/>
<dbReference type="SGD" id="S000028708">
    <property type="gene designation" value="YOL085W-A"/>
</dbReference>
<dbReference type="HOGENOM" id="CLU_2759240_0_0_1"/>
<accession>Q8TGQ8</accession>
<proteinExistence type="uncertain"/>
<name>YO85A_YEAST</name>
<reference key="1">
    <citation type="journal article" date="1995" name="Yeast">
        <title>A 29.425 kb segment on the left arm of yeast chromosome XV contains more than twice as many unknown as known open reading frames.</title>
        <authorList>
            <person name="Zumstein E."/>
            <person name="Pearson B.M."/>
            <person name="Kalogeropoulos A."/>
            <person name="Schweizer M."/>
        </authorList>
    </citation>
    <scope>NUCLEOTIDE SEQUENCE [GENOMIC DNA]</scope>
    <source>
        <strain>ATCC 96604 / S288c / FY1679</strain>
    </source>
</reference>
<reference key="2">
    <citation type="journal article" date="1997" name="Nature">
        <title>The nucleotide sequence of Saccharomyces cerevisiae chromosome XV.</title>
        <authorList>
            <person name="Dujon B."/>
            <person name="Albermann K."/>
            <person name="Aldea M."/>
            <person name="Alexandraki D."/>
            <person name="Ansorge W."/>
            <person name="Arino J."/>
            <person name="Benes V."/>
            <person name="Bohn C."/>
            <person name="Bolotin-Fukuhara M."/>
            <person name="Bordonne R."/>
            <person name="Boyer J."/>
            <person name="Camasses A."/>
            <person name="Casamayor A."/>
            <person name="Casas C."/>
            <person name="Cheret G."/>
            <person name="Cziepluch C."/>
            <person name="Daignan-Fornier B."/>
            <person name="Dang V.-D."/>
            <person name="de Haan M."/>
            <person name="Delius H."/>
            <person name="Durand P."/>
            <person name="Fairhead C."/>
            <person name="Feldmann H."/>
            <person name="Gaillon L."/>
            <person name="Galisson F."/>
            <person name="Gamo F.-J."/>
            <person name="Gancedo C."/>
            <person name="Goffeau A."/>
            <person name="Goulding S.E."/>
            <person name="Grivell L.A."/>
            <person name="Habbig B."/>
            <person name="Hand N.J."/>
            <person name="Hani J."/>
            <person name="Hattenhorst U."/>
            <person name="Hebling U."/>
            <person name="Hernando Y."/>
            <person name="Herrero E."/>
            <person name="Heumann K."/>
            <person name="Hiesel R."/>
            <person name="Hilger F."/>
            <person name="Hofmann B."/>
            <person name="Hollenberg C.P."/>
            <person name="Hughes B."/>
            <person name="Jauniaux J.-C."/>
            <person name="Kalogeropoulos A."/>
            <person name="Katsoulou C."/>
            <person name="Kordes E."/>
            <person name="Lafuente M.J."/>
            <person name="Landt O."/>
            <person name="Louis E.J."/>
            <person name="Maarse A.C."/>
            <person name="Madania A."/>
            <person name="Mannhaupt G."/>
            <person name="Marck C."/>
            <person name="Martin R.P."/>
            <person name="Mewes H.-W."/>
            <person name="Michaux G."/>
            <person name="Paces V."/>
            <person name="Parle-McDermott A.G."/>
            <person name="Pearson B.M."/>
            <person name="Perrin A."/>
            <person name="Pettersson B."/>
            <person name="Poch O."/>
            <person name="Pohl T.M."/>
            <person name="Poirey R."/>
            <person name="Portetelle D."/>
            <person name="Pujol A."/>
            <person name="Purnelle B."/>
            <person name="Ramezani Rad M."/>
            <person name="Rechmann S."/>
            <person name="Schwager C."/>
            <person name="Schweizer M."/>
            <person name="Sor F."/>
            <person name="Sterky F."/>
            <person name="Tarassov I.A."/>
            <person name="Teodoru C."/>
            <person name="Tettelin H."/>
            <person name="Thierry A."/>
            <person name="Tobiasch E."/>
            <person name="Tzermia M."/>
            <person name="Uhlen M."/>
            <person name="Unseld M."/>
            <person name="Valens M."/>
            <person name="Vandenbol M."/>
            <person name="Vetter I."/>
            <person name="Vlcek C."/>
            <person name="Voet M."/>
            <person name="Volckaert G."/>
            <person name="Voss H."/>
            <person name="Wambutt R."/>
            <person name="Wedler H."/>
            <person name="Wiemann S."/>
            <person name="Winsor B."/>
            <person name="Wolfe K.H."/>
            <person name="Zollner A."/>
            <person name="Zumstein E."/>
            <person name="Kleine K."/>
        </authorList>
    </citation>
    <scope>NUCLEOTIDE SEQUENCE [LARGE SCALE GENOMIC DNA]</scope>
    <source>
        <strain>ATCC 204508 / S288c</strain>
    </source>
</reference>
<reference key="3">
    <citation type="journal article" date="2014" name="G3 (Bethesda)">
        <title>The reference genome sequence of Saccharomyces cerevisiae: Then and now.</title>
        <authorList>
            <person name="Engel S.R."/>
            <person name="Dietrich F.S."/>
            <person name="Fisk D.G."/>
            <person name="Binkley G."/>
            <person name="Balakrishnan R."/>
            <person name="Costanzo M.C."/>
            <person name="Dwight S.S."/>
            <person name="Hitz B.C."/>
            <person name="Karra K."/>
            <person name="Nash R.S."/>
            <person name="Weng S."/>
            <person name="Wong E.D."/>
            <person name="Lloyd P."/>
            <person name="Skrzypek M.S."/>
            <person name="Miyasato S.R."/>
            <person name="Simison M."/>
            <person name="Cherry J.M."/>
        </authorList>
    </citation>
    <scope>GENOME REANNOTATION</scope>
    <source>
        <strain>ATCC 204508 / S288c</strain>
    </source>
</reference>
<reference key="4">
    <citation type="journal article" date="2002" name="Nat. Biotechnol.">
        <title>An integrated approach for finding overlooked genes in yeast.</title>
        <authorList>
            <person name="Kumar A."/>
            <person name="Harrison P.M."/>
            <person name="Cheung K.-H."/>
            <person name="Lan N."/>
            <person name="Echols N."/>
            <person name="Bertone P."/>
            <person name="Miller P."/>
            <person name="Gerstein M.B."/>
            <person name="Snyder M."/>
        </authorList>
    </citation>
    <scope>NUCLEOTIDE SEQUENCE [GENOMIC DNA]</scope>
</reference>
<evidence type="ECO:0000305" key="1"/>
<evidence type="ECO:0000305" key="2">
    <source>
    </source>
</evidence>